<evidence type="ECO:0000255" key="1">
    <source>
        <dbReference type="HAMAP-Rule" id="MF_01416"/>
    </source>
</evidence>
<accession>A4QDH0</accession>
<keyword id="KW-0066">ATP synthesis</keyword>
<keyword id="KW-1003">Cell membrane</keyword>
<keyword id="KW-0139">CF(1)</keyword>
<keyword id="KW-0375">Hydrogen ion transport</keyword>
<keyword id="KW-0406">Ion transport</keyword>
<keyword id="KW-0472">Membrane</keyword>
<keyword id="KW-0813">Transport</keyword>
<comment type="function">
    <text evidence="1">F(1)F(0) ATP synthase produces ATP from ADP in the presence of a proton or sodium gradient. F-type ATPases consist of two structural domains, F(1) containing the extramembraneous catalytic core and F(0) containing the membrane proton channel, linked together by a central stalk and a peripheral stalk. During catalysis, ATP synthesis in the catalytic domain of F(1) is coupled via a rotary mechanism of the central stalk subunits to proton translocation.</text>
</comment>
<comment type="function">
    <text evidence="1">This protein is part of the stalk that links CF(0) to CF(1). It either transmits conformational changes from CF(0) to CF(1) or is implicated in proton conduction.</text>
</comment>
<comment type="subunit">
    <text evidence="1">F-type ATPases have 2 components, F(1) - the catalytic core - and F(0) - the membrane proton channel. F(1) has five subunits: alpha(3), beta(3), gamma(1), delta(1), epsilon(1). F(0) has three main subunits: a(1), b(2) and c(10-14). The alpha and beta chains form an alternating ring which encloses part of the gamma chain. F(1) is attached to F(0) by a central stalk formed by the gamma and epsilon chains, while a peripheral stalk is formed by the delta and b chains.</text>
</comment>
<comment type="subcellular location">
    <subcellularLocation>
        <location evidence="1">Cell membrane</location>
        <topology evidence="1">Peripheral membrane protein</topology>
    </subcellularLocation>
</comment>
<comment type="similarity">
    <text evidence="1">Belongs to the ATPase delta chain family.</text>
</comment>
<feature type="chain" id="PRO_0000382090" description="ATP synthase subunit delta">
    <location>
        <begin position="1"/>
        <end position="271"/>
    </location>
</feature>
<gene>
    <name evidence="1" type="primary">atpH</name>
    <name type="ordered locus">cgR_1287</name>
</gene>
<name>ATPD_CORGB</name>
<dbReference type="EMBL" id="AP009044">
    <property type="protein sequence ID" value="BAF54267.1"/>
    <property type="molecule type" value="Genomic_DNA"/>
</dbReference>
<dbReference type="RefSeq" id="WP_003854845.1">
    <property type="nucleotide sequence ID" value="NC_009342.1"/>
</dbReference>
<dbReference type="SMR" id="A4QDH0"/>
<dbReference type="GeneID" id="1019192"/>
<dbReference type="KEGG" id="cgt:cgR_1287"/>
<dbReference type="HOGENOM" id="CLU_088880_0_0_11"/>
<dbReference type="PhylomeDB" id="A4QDH0"/>
<dbReference type="Proteomes" id="UP000006698">
    <property type="component" value="Chromosome"/>
</dbReference>
<dbReference type="GO" id="GO:0005886">
    <property type="term" value="C:plasma membrane"/>
    <property type="evidence" value="ECO:0007669"/>
    <property type="project" value="UniProtKB-SubCell"/>
</dbReference>
<dbReference type="GO" id="GO:0045259">
    <property type="term" value="C:proton-transporting ATP synthase complex"/>
    <property type="evidence" value="ECO:0007669"/>
    <property type="project" value="UniProtKB-KW"/>
</dbReference>
<dbReference type="GO" id="GO:0046933">
    <property type="term" value="F:proton-transporting ATP synthase activity, rotational mechanism"/>
    <property type="evidence" value="ECO:0007669"/>
    <property type="project" value="UniProtKB-UniRule"/>
</dbReference>
<dbReference type="HAMAP" id="MF_01416">
    <property type="entry name" value="ATP_synth_delta_bact"/>
    <property type="match status" value="1"/>
</dbReference>
<dbReference type="InterPro" id="IPR020781">
    <property type="entry name" value="ATPase_OSCP/d_CS"/>
</dbReference>
<dbReference type="InterPro" id="IPR000711">
    <property type="entry name" value="ATPase_OSCP/dsu"/>
</dbReference>
<dbReference type="NCBIfam" id="TIGR01145">
    <property type="entry name" value="ATP_synt_delta"/>
    <property type="match status" value="1"/>
</dbReference>
<dbReference type="NCBIfam" id="NF009967">
    <property type="entry name" value="PRK13430.1"/>
    <property type="match status" value="1"/>
</dbReference>
<dbReference type="PANTHER" id="PTHR11910">
    <property type="entry name" value="ATP SYNTHASE DELTA CHAIN"/>
    <property type="match status" value="1"/>
</dbReference>
<dbReference type="Pfam" id="PF00213">
    <property type="entry name" value="OSCP"/>
    <property type="match status" value="1"/>
</dbReference>
<dbReference type="PRINTS" id="PR00125">
    <property type="entry name" value="ATPASEDELTA"/>
</dbReference>
<dbReference type="PROSITE" id="PS00389">
    <property type="entry name" value="ATPASE_DELTA"/>
    <property type="match status" value="1"/>
</dbReference>
<sequence>MHAASREALAKVSSDLDAALAADNTMAVAAQAGTELFDVVDILDGDRALRVAVADSSKDAHSRVGLIEAVFGGKVSPSVLEVLKDAAEQTWSTPREFRAGLVQLGRRALLRSAEKQGQLGQVEDELFRLSRILDRESKLTQLLSDRTQEIGGRRDLLAKVLYGKVTAVTEALALQAIGRPEHNPIDDIAALAGAVAELQGRSVAHVVTAVELNEGQQQALAEKLGRIYGRAMSIHSEVDTSLLGGMIIRVGDEVIDGSTSGKLERLRASFA</sequence>
<organism>
    <name type="scientific">Corynebacterium glutamicum (strain R)</name>
    <dbReference type="NCBI Taxonomy" id="340322"/>
    <lineage>
        <taxon>Bacteria</taxon>
        <taxon>Bacillati</taxon>
        <taxon>Actinomycetota</taxon>
        <taxon>Actinomycetes</taxon>
        <taxon>Mycobacteriales</taxon>
        <taxon>Corynebacteriaceae</taxon>
        <taxon>Corynebacterium</taxon>
    </lineage>
</organism>
<proteinExistence type="inferred from homology"/>
<reference key="1">
    <citation type="journal article" date="2007" name="Microbiology">
        <title>Comparative analysis of the Corynebacterium glutamicum group and complete genome sequence of strain R.</title>
        <authorList>
            <person name="Yukawa H."/>
            <person name="Omumasaba C.A."/>
            <person name="Nonaka H."/>
            <person name="Kos P."/>
            <person name="Okai N."/>
            <person name="Suzuki N."/>
            <person name="Suda M."/>
            <person name="Tsuge Y."/>
            <person name="Watanabe J."/>
            <person name="Ikeda Y."/>
            <person name="Vertes A.A."/>
            <person name="Inui M."/>
        </authorList>
    </citation>
    <scope>NUCLEOTIDE SEQUENCE [LARGE SCALE GENOMIC DNA]</scope>
    <source>
        <strain>R</strain>
    </source>
</reference>
<protein>
    <recommendedName>
        <fullName evidence="1">ATP synthase subunit delta</fullName>
    </recommendedName>
    <alternativeName>
        <fullName evidence="1">ATP synthase F(1) sector subunit delta</fullName>
    </alternativeName>
    <alternativeName>
        <fullName evidence="1">F-type ATPase subunit delta</fullName>
        <shortName evidence="1">F-ATPase subunit delta</shortName>
    </alternativeName>
</protein>